<keyword id="KW-0456">Lyase</keyword>
<keyword id="KW-0460">Magnesium</keyword>
<keyword id="KW-0464">Manganese</keyword>
<keyword id="KW-0479">Metal-binding</keyword>
<keyword id="KW-0521">NADP</keyword>
<keyword id="KW-0560">Oxidoreductase</keyword>
<keyword id="KW-1185">Reference proteome</keyword>
<gene>
    <name type="primary">ytsJ</name>
    <name type="ordered locus">BSU29220</name>
</gene>
<sequence>MSLREEALHLHKVNQGKLESKSKVEVRNAKDLSLAYSPGVAEPCKDIHEDINKVYDYTMKGNMVAVVTDGTAVLGLGNIGPEAALPVMEGKAVLFKSFAGVDAFPIALNTNDVDKIVETVKLLEPTFGGVNLEDIAAPNCFIIEERLKKETNIPVFHDDQHGTAIVTVAGLVNALKLSGKSMSSIKVVANGAGAAGIAIIKLLHHYGVRDIVMCDSKGAIYEGRPNGMNDVKNEVAKFTNQDRKDGSLKDVIVDADVFIGVSVAGALTKEMVQSMAKDPIIFAMANPNPEIMPEDAREAGASVVGTGRSDFPNQVNNVLAFPGIFRGALDVRATHINEEMKIAAVEAIASLVSEDELSADYVIPAPFDKRVAPAVAKAVAKAAMETGVARITVDPEEVAEKTRKLTIIGE</sequence>
<name>MAO4_BACSU</name>
<evidence type="ECO:0000250" key="1">
    <source>
        <dbReference type="UniProtKB" id="P40927"/>
    </source>
</evidence>
<evidence type="ECO:0000250" key="2">
    <source>
        <dbReference type="UniProtKB" id="P76558"/>
    </source>
</evidence>
<evidence type="ECO:0000269" key="3">
    <source>
    </source>
</evidence>
<evidence type="ECO:0000269" key="4">
    <source>
    </source>
</evidence>
<evidence type="ECO:0000269" key="5">
    <source>
    </source>
</evidence>
<evidence type="ECO:0000269" key="6">
    <source>
    </source>
</evidence>
<evidence type="ECO:0000303" key="7">
    <source>
    </source>
</evidence>
<evidence type="ECO:0000303" key="8">
    <source>
    </source>
</evidence>
<evidence type="ECO:0000305" key="9"/>
<protein>
    <recommendedName>
        <fullName evidence="8">Bifunctional malic/malolactic enzyme</fullName>
        <ecNumber evidence="3 6">1.1.1.40</ecNumber>
        <ecNumber evidence="6">4.1.1.101</ecNumber>
    </recommendedName>
    <alternativeName>
        <fullName>Malolactic enzyme</fullName>
        <shortName>MLE</shortName>
    </alternativeName>
    <alternativeName>
        <fullName>NADP-dependent malic enzyme</fullName>
        <shortName>NADP-ME</shortName>
    </alternativeName>
</protein>
<comment type="function">
    <text evidence="3 6">Bifunctional enzyme with both malic and malolactic enzyme activities (PubMed:33824210). In the absence of NADPH, catalyzes the reversible decarboxylation of malate to pyruvate (PubMed:16788182, PubMed:33824210). Can use NAD and NADP, but with a very strong preference for NADP (PubMed:16788182). In the presence of excess NADPH, catalyzes the non-oxidative decarboxylation of malate to lactate (PubMed:33824210). During growth on glucose, contributes to NADPH balancing via oxidation of the NADPH produced in excess by other enzymatic reactions (PubMed:33824210). Can also catalyze the decarboxylation of oxaloacetate (PubMed:16788182).</text>
</comment>
<comment type="catalytic activity">
    <reaction evidence="3 6">
        <text>(S)-malate + NADP(+) = pyruvate + CO2 + NADPH</text>
        <dbReference type="Rhea" id="RHEA:18253"/>
        <dbReference type="ChEBI" id="CHEBI:15361"/>
        <dbReference type="ChEBI" id="CHEBI:15589"/>
        <dbReference type="ChEBI" id="CHEBI:16526"/>
        <dbReference type="ChEBI" id="CHEBI:57783"/>
        <dbReference type="ChEBI" id="CHEBI:58349"/>
        <dbReference type="EC" id="1.1.1.40"/>
    </reaction>
</comment>
<comment type="catalytic activity">
    <reaction evidence="3">
        <text>oxaloacetate + H(+) = pyruvate + CO2</text>
        <dbReference type="Rhea" id="RHEA:15641"/>
        <dbReference type="ChEBI" id="CHEBI:15361"/>
        <dbReference type="ChEBI" id="CHEBI:15378"/>
        <dbReference type="ChEBI" id="CHEBI:16452"/>
        <dbReference type="ChEBI" id="CHEBI:16526"/>
        <dbReference type="EC" id="1.1.1.40"/>
    </reaction>
</comment>
<comment type="catalytic activity">
    <reaction evidence="6">
        <text>(S)-malate + H(+) = (S)-lactate + CO2</text>
        <dbReference type="Rhea" id="RHEA:46276"/>
        <dbReference type="ChEBI" id="CHEBI:15378"/>
        <dbReference type="ChEBI" id="CHEBI:15589"/>
        <dbReference type="ChEBI" id="CHEBI:16526"/>
        <dbReference type="ChEBI" id="CHEBI:16651"/>
        <dbReference type="EC" id="4.1.1.101"/>
    </reaction>
</comment>
<comment type="cofactor">
    <cofactor evidence="2">
        <name>Mg(2+)</name>
        <dbReference type="ChEBI" id="CHEBI:18420"/>
    </cofactor>
    <cofactor evidence="2">
        <name>Mn(2+)</name>
        <dbReference type="ChEBI" id="CHEBI:29035"/>
    </cofactor>
    <text evidence="2">Divalent metal cations.</text>
</comment>
<comment type="activity regulation">
    <text evidence="6">NADPH is a strong modulator that switches activity from a pyruvate-producing malic enzyme to a lactate-generating malolactic enzyme.</text>
</comment>
<comment type="biophysicochemical properties">
    <kinetics>
        <KM evidence="3">1.55 mM for malate</KM>
        <KM evidence="6">5.3 mM for pyruvate</KM>
        <KM evidence="3">2.8 mM for NAD</KM>
        <KM evidence="3">0.055 mM for NADP</KM>
        <KM evidence="6">0.8 mM for NADPH</KM>
    </kinetics>
</comment>
<comment type="subunit">
    <text evidence="5">Interacts with BrxC.</text>
</comment>
<comment type="induction">
    <text evidence="3">Transcribed at a high level under all of the conditions tested.</text>
</comment>
<comment type="disruption phenotype">
    <text evidence="3 4 6">Mutant shows wild-type growth on glucose but a much slower growth rate on malate, fumarate, or succinate plus glutamate (PubMed:16788182). Overexpression of the other three malic enzymes, mleA, maeA or malS cannot compensate for the ytsJ deletion (PubMed:16788182). The ATP concentrations in the mutant grown in minimal medium with glucose are similar to the wild-type level. ATP concentrations decrease by about 20% in malate minimal medium (PubMed:23136871). NADPH overproduction is virtually abolished in the deletion mutant (PubMed:33824210).</text>
</comment>
<comment type="similarity">
    <text evidence="9">Belongs to the malic enzymes family.</text>
</comment>
<organism>
    <name type="scientific">Bacillus subtilis (strain 168)</name>
    <dbReference type="NCBI Taxonomy" id="224308"/>
    <lineage>
        <taxon>Bacteria</taxon>
        <taxon>Bacillati</taxon>
        <taxon>Bacillota</taxon>
        <taxon>Bacilli</taxon>
        <taxon>Bacillales</taxon>
        <taxon>Bacillaceae</taxon>
        <taxon>Bacillus</taxon>
    </lineage>
</organism>
<reference key="1">
    <citation type="journal article" date="1997" name="Microbiology">
        <title>Sequencing and functional annotation of the Bacillus subtilis genes in the 200 kb rrnB-dnaB region.</title>
        <authorList>
            <person name="Lapidus A."/>
            <person name="Galleron N."/>
            <person name="Sorokin A."/>
            <person name="Ehrlich S.D."/>
        </authorList>
    </citation>
    <scope>NUCLEOTIDE SEQUENCE [GENOMIC DNA]</scope>
    <source>
        <strain>168</strain>
    </source>
</reference>
<reference key="2">
    <citation type="journal article" date="1997" name="Nature">
        <title>The complete genome sequence of the Gram-positive bacterium Bacillus subtilis.</title>
        <authorList>
            <person name="Kunst F."/>
            <person name="Ogasawara N."/>
            <person name="Moszer I."/>
            <person name="Albertini A.M."/>
            <person name="Alloni G."/>
            <person name="Azevedo V."/>
            <person name="Bertero M.G."/>
            <person name="Bessieres P."/>
            <person name="Bolotin A."/>
            <person name="Borchert S."/>
            <person name="Borriss R."/>
            <person name="Boursier L."/>
            <person name="Brans A."/>
            <person name="Braun M."/>
            <person name="Brignell S.C."/>
            <person name="Bron S."/>
            <person name="Brouillet S."/>
            <person name="Bruschi C.V."/>
            <person name="Caldwell B."/>
            <person name="Capuano V."/>
            <person name="Carter N.M."/>
            <person name="Choi S.-K."/>
            <person name="Codani J.-J."/>
            <person name="Connerton I.F."/>
            <person name="Cummings N.J."/>
            <person name="Daniel R.A."/>
            <person name="Denizot F."/>
            <person name="Devine K.M."/>
            <person name="Duesterhoeft A."/>
            <person name="Ehrlich S.D."/>
            <person name="Emmerson P.T."/>
            <person name="Entian K.-D."/>
            <person name="Errington J."/>
            <person name="Fabret C."/>
            <person name="Ferrari E."/>
            <person name="Foulger D."/>
            <person name="Fritz C."/>
            <person name="Fujita M."/>
            <person name="Fujita Y."/>
            <person name="Fuma S."/>
            <person name="Galizzi A."/>
            <person name="Galleron N."/>
            <person name="Ghim S.-Y."/>
            <person name="Glaser P."/>
            <person name="Goffeau A."/>
            <person name="Golightly E.J."/>
            <person name="Grandi G."/>
            <person name="Guiseppi G."/>
            <person name="Guy B.J."/>
            <person name="Haga K."/>
            <person name="Haiech J."/>
            <person name="Harwood C.R."/>
            <person name="Henaut A."/>
            <person name="Hilbert H."/>
            <person name="Holsappel S."/>
            <person name="Hosono S."/>
            <person name="Hullo M.-F."/>
            <person name="Itaya M."/>
            <person name="Jones L.-M."/>
            <person name="Joris B."/>
            <person name="Karamata D."/>
            <person name="Kasahara Y."/>
            <person name="Klaerr-Blanchard M."/>
            <person name="Klein C."/>
            <person name="Kobayashi Y."/>
            <person name="Koetter P."/>
            <person name="Koningstein G."/>
            <person name="Krogh S."/>
            <person name="Kumano M."/>
            <person name="Kurita K."/>
            <person name="Lapidus A."/>
            <person name="Lardinois S."/>
            <person name="Lauber J."/>
            <person name="Lazarevic V."/>
            <person name="Lee S.-M."/>
            <person name="Levine A."/>
            <person name="Liu H."/>
            <person name="Masuda S."/>
            <person name="Mauel C."/>
            <person name="Medigue C."/>
            <person name="Medina N."/>
            <person name="Mellado R.P."/>
            <person name="Mizuno M."/>
            <person name="Moestl D."/>
            <person name="Nakai S."/>
            <person name="Noback M."/>
            <person name="Noone D."/>
            <person name="O'Reilly M."/>
            <person name="Ogawa K."/>
            <person name="Ogiwara A."/>
            <person name="Oudega B."/>
            <person name="Park S.-H."/>
            <person name="Parro V."/>
            <person name="Pohl T.M."/>
            <person name="Portetelle D."/>
            <person name="Porwollik S."/>
            <person name="Prescott A.M."/>
            <person name="Presecan E."/>
            <person name="Pujic P."/>
            <person name="Purnelle B."/>
            <person name="Rapoport G."/>
            <person name="Rey M."/>
            <person name="Reynolds S."/>
            <person name="Rieger M."/>
            <person name="Rivolta C."/>
            <person name="Rocha E."/>
            <person name="Roche B."/>
            <person name="Rose M."/>
            <person name="Sadaie Y."/>
            <person name="Sato T."/>
            <person name="Scanlan E."/>
            <person name="Schleich S."/>
            <person name="Schroeter R."/>
            <person name="Scoffone F."/>
            <person name="Sekiguchi J."/>
            <person name="Sekowska A."/>
            <person name="Seror S.J."/>
            <person name="Serror P."/>
            <person name="Shin B.-S."/>
            <person name="Soldo B."/>
            <person name="Sorokin A."/>
            <person name="Tacconi E."/>
            <person name="Takagi T."/>
            <person name="Takahashi H."/>
            <person name="Takemaru K."/>
            <person name="Takeuchi M."/>
            <person name="Tamakoshi A."/>
            <person name="Tanaka T."/>
            <person name="Terpstra P."/>
            <person name="Tognoni A."/>
            <person name="Tosato V."/>
            <person name="Uchiyama S."/>
            <person name="Vandenbol M."/>
            <person name="Vannier F."/>
            <person name="Vassarotti A."/>
            <person name="Viari A."/>
            <person name="Wambutt R."/>
            <person name="Wedler E."/>
            <person name="Wedler H."/>
            <person name="Weitzenegger T."/>
            <person name="Winters P."/>
            <person name="Wipat A."/>
            <person name="Yamamoto H."/>
            <person name="Yamane K."/>
            <person name="Yasumoto K."/>
            <person name="Yata K."/>
            <person name="Yoshida K."/>
            <person name="Yoshikawa H.-F."/>
            <person name="Zumstein E."/>
            <person name="Yoshikawa H."/>
            <person name="Danchin A."/>
        </authorList>
    </citation>
    <scope>NUCLEOTIDE SEQUENCE [LARGE SCALE GENOMIC DNA]</scope>
    <source>
        <strain>168</strain>
    </source>
</reference>
<reference key="3">
    <citation type="journal article" date="2006" name="J. Bacteriol.">
        <title>YtsJ has the major physiological role of the four paralogous malic enzyme isoforms in Bacillus subtilis.</title>
        <authorList>
            <person name="Lerondel G."/>
            <person name="Doan T."/>
            <person name="Zamboni N."/>
            <person name="Sauer U."/>
            <person name="Aymerich S."/>
        </authorList>
    </citation>
    <scope>FUNCTION</scope>
    <scope>CATALYTIC ACTIVITY</scope>
    <scope>BIOPHYSICOCHEMICAL PROPERTIES</scope>
    <scope>INDUCTION</scope>
    <scope>DISRUPTION PHENOTYPE</scope>
    <source>
        <strain>168</strain>
    </source>
</reference>
<reference key="4">
    <citation type="journal article" date="2013" name="FEMS Microbiol. Lett.">
        <title>Malate metabolism in Bacillus subtilis: distinct roles for three classes of malate-oxidizing enzymes.</title>
        <authorList>
            <person name="Meyer F.M."/>
            <person name="Stuelke J."/>
        </authorList>
    </citation>
    <scope>DISRUPTION PHENOTYPE</scope>
    <source>
        <strain>168</strain>
    </source>
</reference>
<reference key="5">
    <citation type="journal article" date="2021" name="MBio">
        <title>Bifunctional malic/malolactic enzyme provides a novel mechanism for NADPH-balancing in Bacillus subtilis.</title>
        <authorList>
            <person name="Hoerl M."/>
            <person name="Fuhrer T."/>
            <person name="Zamboni N."/>
        </authorList>
    </citation>
    <scope>FUNCTION AS A BIFUNCTIONAL ENZYME</scope>
    <scope>CATALYTIC ACTIVITY</scope>
    <scope>ACTIVITY REGULATION</scope>
    <scope>BIOPHYSICOCHEMICAL PROPERTIES</scope>
    <scope>DISRUPTION PHENOTYPE</scope>
</reference>
<reference key="6">
    <citation type="journal article" date="2021" name="Redox Biol.">
        <title>The Bacillus subtilis monothiol bacilliredoxin BrxC (YtxJ) and the Bdr (YpdA) disulfide reductase reduce S-bacillithiolated proteins.</title>
        <authorList>
            <person name="Gaballa A."/>
            <person name="Su T.T."/>
            <person name="Helmann J.D."/>
        </authorList>
    </citation>
    <scope>INTERACTION WITH BRXC</scope>
    <scope>IDENTIFICATION BY MASS SPECTROMETRY</scope>
    <source>
        <strain evidence="7">168 / CU1065</strain>
    </source>
</reference>
<proteinExistence type="evidence at protein level"/>
<dbReference type="EC" id="1.1.1.40" evidence="3 6"/>
<dbReference type="EC" id="4.1.1.101" evidence="6"/>
<dbReference type="EMBL" id="AF008220">
    <property type="protein sequence ID" value="AAC00339.1"/>
    <property type="molecule type" value="Genomic_DNA"/>
</dbReference>
<dbReference type="EMBL" id="AL009126">
    <property type="protein sequence ID" value="CAB14882.1"/>
    <property type="molecule type" value="Genomic_DNA"/>
</dbReference>
<dbReference type="PIR" id="C70001">
    <property type="entry name" value="C70001"/>
</dbReference>
<dbReference type="SMR" id="O34962"/>
<dbReference type="FunCoup" id="O34962">
    <property type="interactions" value="403"/>
</dbReference>
<dbReference type="IntAct" id="O34962">
    <property type="interactions" value="2"/>
</dbReference>
<dbReference type="MINT" id="O34962"/>
<dbReference type="STRING" id="224308.BSU29220"/>
<dbReference type="jPOST" id="O34962"/>
<dbReference type="PaxDb" id="224308-BSU29220"/>
<dbReference type="DNASU" id="937378"/>
<dbReference type="EnsemblBacteria" id="CAB14882">
    <property type="protein sequence ID" value="CAB14882"/>
    <property type="gene ID" value="BSU_29220"/>
</dbReference>
<dbReference type="GeneID" id="937378"/>
<dbReference type="KEGG" id="bsu:BSU29220"/>
<dbReference type="PATRIC" id="fig|224308.179.peg.3173"/>
<dbReference type="eggNOG" id="COG0281">
    <property type="taxonomic scope" value="Bacteria"/>
</dbReference>
<dbReference type="InParanoid" id="O34962"/>
<dbReference type="OrthoDB" id="9805787at2"/>
<dbReference type="PhylomeDB" id="O34962"/>
<dbReference type="BioCyc" id="BSUB:BSU29220-MONOMER"/>
<dbReference type="Proteomes" id="UP000001570">
    <property type="component" value="Chromosome"/>
</dbReference>
<dbReference type="GO" id="GO:0004473">
    <property type="term" value="F:malate dehydrogenase (decarboxylating) (NADP+) activity"/>
    <property type="evidence" value="ECO:0007669"/>
    <property type="project" value="RHEA"/>
</dbReference>
<dbReference type="GO" id="GO:0043883">
    <property type="term" value="F:malolactic enzyme activity"/>
    <property type="evidence" value="ECO:0007669"/>
    <property type="project" value="RHEA"/>
</dbReference>
<dbReference type="GO" id="GO:0046872">
    <property type="term" value="F:metal ion binding"/>
    <property type="evidence" value="ECO:0007669"/>
    <property type="project" value="UniProtKB-KW"/>
</dbReference>
<dbReference type="GO" id="GO:0051287">
    <property type="term" value="F:NAD binding"/>
    <property type="evidence" value="ECO:0007669"/>
    <property type="project" value="InterPro"/>
</dbReference>
<dbReference type="GO" id="GO:0008948">
    <property type="term" value="F:oxaloacetate decarboxylase activity"/>
    <property type="evidence" value="ECO:0007669"/>
    <property type="project" value="RHEA"/>
</dbReference>
<dbReference type="CDD" id="cd05311">
    <property type="entry name" value="NAD_bind_2_malic_enz"/>
    <property type="match status" value="1"/>
</dbReference>
<dbReference type="FunFam" id="3.40.50.10380:FF:000003">
    <property type="entry name" value="NADP-dependent malic enzyme"/>
    <property type="match status" value="1"/>
</dbReference>
<dbReference type="FunFam" id="3.40.50.720:FF:000095">
    <property type="entry name" value="NADP-dependent malic enzyme"/>
    <property type="match status" value="1"/>
</dbReference>
<dbReference type="Gene3D" id="3.40.50.10380">
    <property type="entry name" value="Malic enzyme, N-terminal domain"/>
    <property type="match status" value="1"/>
</dbReference>
<dbReference type="Gene3D" id="3.40.50.720">
    <property type="entry name" value="NAD(P)-binding Rossmann-like Domain"/>
    <property type="match status" value="1"/>
</dbReference>
<dbReference type="InterPro" id="IPR046346">
    <property type="entry name" value="Aminoacid_DH-like_N_sf"/>
</dbReference>
<dbReference type="InterPro" id="IPR051674">
    <property type="entry name" value="Malate_Decarboxylase"/>
</dbReference>
<dbReference type="InterPro" id="IPR015884">
    <property type="entry name" value="Malic_enzyme_CS"/>
</dbReference>
<dbReference type="InterPro" id="IPR012301">
    <property type="entry name" value="Malic_N_dom"/>
</dbReference>
<dbReference type="InterPro" id="IPR037062">
    <property type="entry name" value="Malic_N_dom_sf"/>
</dbReference>
<dbReference type="InterPro" id="IPR012302">
    <property type="entry name" value="Malic_NAD-bd"/>
</dbReference>
<dbReference type="InterPro" id="IPR045213">
    <property type="entry name" value="Malic_NAD-bd_bact_type"/>
</dbReference>
<dbReference type="InterPro" id="IPR001891">
    <property type="entry name" value="Malic_OxRdtase"/>
</dbReference>
<dbReference type="InterPro" id="IPR036291">
    <property type="entry name" value="NAD(P)-bd_dom_sf"/>
</dbReference>
<dbReference type="PANTHER" id="PTHR43237">
    <property type="entry name" value="NADP-DEPENDENT MALIC ENZYME"/>
    <property type="match status" value="1"/>
</dbReference>
<dbReference type="PANTHER" id="PTHR43237:SF4">
    <property type="entry name" value="NADP-DEPENDENT MALIC ENZYME"/>
    <property type="match status" value="1"/>
</dbReference>
<dbReference type="Pfam" id="PF00390">
    <property type="entry name" value="malic"/>
    <property type="match status" value="1"/>
</dbReference>
<dbReference type="Pfam" id="PF03949">
    <property type="entry name" value="Malic_M"/>
    <property type="match status" value="1"/>
</dbReference>
<dbReference type="PIRSF" id="PIRSF000106">
    <property type="entry name" value="ME"/>
    <property type="match status" value="1"/>
</dbReference>
<dbReference type="PRINTS" id="PR00072">
    <property type="entry name" value="MALOXRDTASE"/>
</dbReference>
<dbReference type="SMART" id="SM01274">
    <property type="entry name" value="malic"/>
    <property type="match status" value="1"/>
</dbReference>
<dbReference type="SMART" id="SM00919">
    <property type="entry name" value="Malic_M"/>
    <property type="match status" value="1"/>
</dbReference>
<dbReference type="SUPFAM" id="SSF53223">
    <property type="entry name" value="Aminoacid dehydrogenase-like, N-terminal domain"/>
    <property type="match status" value="1"/>
</dbReference>
<dbReference type="SUPFAM" id="SSF51735">
    <property type="entry name" value="NAD(P)-binding Rossmann-fold domains"/>
    <property type="match status" value="1"/>
</dbReference>
<dbReference type="PROSITE" id="PS00331">
    <property type="entry name" value="MALIC_ENZYMES"/>
    <property type="match status" value="1"/>
</dbReference>
<feature type="chain" id="PRO_0000160211" description="Bifunctional malic/malolactic enzyme">
    <location>
        <begin position="1"/>
        <end position="410"/>
    </location>
</feature>
<feature type="active site" description="Proton donor" evidence="1">
    <location>
        <position position="36"/>
    </location>
</feature>
<feature type="active site" description="Proton acceptor" evidence="1">
    <location>
        <position position="91"/>
    </location>
</feature>
<feature type="binding site" evidence="1">
    <location>
        <position position="133"/>
    </location>
    <ligand>
        <name>a divalent metal cation</name>
        <dbReference type="ChEBI" id="CHEBI:60240"/>
    </ligand>
</feature>
<feature type="binding site" evidence="1">
    <location>
        <position position="134"/>
    </location>
    <ligand>
        <name>a divalent metal cation</name>
        <dbReference type="ChEBI" id="CHEBI:60240"/>
    </ligand>
</feature>
<feature type="binding site" evidence="1">
    <location>
        <position position="159"/>
    </location>
    <ligand>
        <name>a divalent metal cation</name>
        <dbReference type="ChEBI" id="CHEBI:60240"/>
    </ligand>
</feature>
<feature type="binding site" evidence="1">
    <location>
        <begin position="192"/>
        <end position="195"/>
    </location>
    <ligand>
        <name>NADP(+)</name>
        <dbReference type="ChEBI" id="CHEBI:58349"/>
    </ligand>
</feature>
<feature type="binding site" evidence="1">
    <location>
        <position position="286"/>
    </location>
    <ligand>
        <name>NADP(+)</name>
        <dbReference type="ChEBI" id="CHEBI:58349"/>
    </ligand>
</feature>
<feature type="binding site" evidence="1">
    <location>
        <position position="317"/>
    </location>
    <ligand>
        <name>NADP(+)</name>
        <dbReference type="ChEBI" id="CHEBI:58349"/>
    </ligand>
</feature>
<accession>O34962</accession>